<reference key="1">
    <citation type="journal article" date="2002" name="Proc. Natl. Acad. Sci. U.S.A.">
        <title>Mammalian mitogenomic relationships and the root of the eutherian tree.</title>
        <authorList>
            <person name="Arnason U."/>
            <person name="Adegoke J.A."/>
            <person name="Bodin K."/>
            <person name="Born E.W."/>
            <person name="Esa Y.B."/>
            <person name="Gullberg A."/>
            <person name="Nilsson M."/>
            <person name="Short R.V."/>
            <person name="Xu X."/>
            <person name="Janke A."/>
        </authorList>
    </citation>
    <scope>NUCLEOTIDE SEQUENCE [GENOMIC DNA]</scope>
</reference>
<reference key="2">
    <citation type="journal article" date="1988" name="Mol. Biol. Evol.">
        <title>Molecular phylogeny and evolution of primate mitochondrial DNA.</title>
        <authorList>
            <person name="Hayasaka K."/>
            <person name="Gojobori T."/>
            <person name="Horai S."/>
        </authorList>
    </citation>
    <scope>NUCLEOTIDE SEQUENCE [GENOMIC DNA] OF 1-79</scope>
</reference>
<name>NU5M_LEMCA</name>
<dbReference type="EC" id="7.1.1.2" evidence="1"/>
<dbReference type="EMBL" id="AJ421451">
    <property type="protein sequence ID" value="CAD13431.1"/>
    <property type="molecule type" value="Genomic_DNA"/>
</dbReference>
<dbReference type="EMBL" id="M22657">
    <property type="protein sequence ID" value="AAA69752.1"/>
    <property type="molecule type" value="Genomic_DNA"/>
</dbReference>
<dbReference type="PIR" id="I77320">
    <property type="entry name" value="I77320"/>
</dbReference>
<dbReference type="RefSeq" id="NP_659298.1">
    <property type="nucleotide sequence ID" value="NC_004025.1"/>
</dbReference>
<dbReference type="SMR" id="Q34879"/>
<dbReference type="OrthoDB" id="10069788at2759"/>
<dbReference type="GO" id="GO:0005743">
    <property type="term" value="C:mitochondrial inner membrane"/>
    <property type="evidence" value="ECO:0000250"/>
    <property type="project" value="UniProtKB"/>
</dbReference>
<dbReference type="GO" id="GO:0008137">
    <property type="term" value="F:NADH dehydrogenase (ubiquinone) activity"/>
    <property type="evidence" value="ECO:0000250"/>
    <property type="project" value="UniProtKB"/>
</dbReference>
<dbReference type="GO" id="GO:0015990">
    <property type="term" value="P:electron transport coupled proton transport"/>
    <property type="evidence" value="ECO:0007669"/>
    <property type="project" value="TreeGrafter"/>
</dbReference>
<dbReference type="GO" id="GO:0006120">
    <property type="term" value="P:mitochondrial electron transport, NADH to ubiquinone"/>
    <property type="evidence" value="ECO:0000250"/>
    <property type="project" value="UniProtKB"/>
</dbReference>
<dbReference type="GO" id="GO:0032981">
    <property type="term" value="P:mitochondrial respiratory chain complex I assembly"/>
    <property type="evidence" value="ECO:0000250"/>
    <property type="project" value="UniProtKB"/>
</dbReference>
<dbReference type="InterPro" id="IPR010934">
    <property type="entry name" value="NADH_DH_su5_C"/>
</dbReference>
<dbReference type="InterPro" id="IPR018393">
    <property type="entry name" value="NADHpl_OxRdtase_5_subgr"/>
</dbReference>
<dbReference type="InterPro" id="IPR001750">
    <property type="entry name" value="ND/Mrp_TM"/>
</dbReference>
<dbReference type="InterPro" id="IPR003945">
    <property type="entry name" value="NU5C-like"/>
</dbReference>
<dbReference type="InterPro" id="IPR001516">
    <property type="entry name" value="Proton_antipo_N"/>
</dbReference>
<dbReference type="NCBIfam" id="TIGR01974">
    <property type="entry name" value="NDH_I_L"/>
    <property type="match status" value="1"/>
</dbReference>
<dbReference type="PANTHER" id="PTHR42829">
    <property type="entry name" value="NADH-UBIQUINONE OXIDOREDUCTASE CHAIN 5"/>
    <property type="match status" value="1"/>
</dbReference>
<dbReference type="PANTHER" id="PTHR42829:SF2">
    <property type="entry name" value="NADH-UBIQUINONE OXIDOREDUCTASE CHAIN 5"/>
    <property type="match status" value="1"/>
</dbReference>
<dbReference type="Pfam" id="PF06455">
    <property type="entry name" value="NADH5_C"/>
    <property type="match status" value="1"/>
</dbReference>
<dbReference type="Pfam" id="PF00361">
    <property type="entry name" value="Proton_antipo_M"/>
    <property type="match status" value="1"/>
</dbReference>
<dbReference type="Pfam" id="PF00662">
    <property type="entry name" value="Proton_antipo_N"/>
    <property type="match status" value="1"/>
</dbReference>
<dbReference type="PRINTS" id="PR01434">
    <property type="entry name" value="NADHDHGNASE5"/>
</dbReference>
<protein>
    <recommendedName>
        <fullName>NADH-ubiquinone oxidoreductase chain 5</fullName>
        <ecNumber evidence="1">7.1.1.2</ecNumber>
    </recommendedName>
    <alternativeName>
        <fullName>NADH dehydrogenase subunit 5</fullName>
    </alternativeName>
</protein>
<accession>Q34879</accession>
<accession>Q8LX24</accession>
<keyword id="KW-0249">Electron transport</keyword>
<keyword id="KW-0472">Membrane</keyword>
<keyword id="KW-0496">Mitochondrion</keyword>
<keyword id="KW-0999">Mitochondrion inner membrane</keyword>
<keyword id="KW-0520">NAD</keyword>
<keyword id="KW-0679">Respiratory chain</keyword>
<keyword id="KW-1278">Translocase</keyword>
<keyword id="KW-0812">Transmembrane</keyword>
<keyword id="KW-1133">Transmembrane helix</keyword>
<keyword id="KW-0813">Transport</keyword>
<keyword id="KW-0830">Ubiquinone</keyword>
<comment type="function">
    <text evidence="1">Core subunit of the mitochondrial membrane respiratory chain NADH dehydrogenase (Complex I) which catalyzes electron transfer from NADH through the respiratory chain, using ubiquinone as an electron acceptor. Essential for the catalytic activity and assembly of complex I.</text>
</comment>
<comment type="catalytic activity">
    <reaction evidence="1">
        <text>a ubiquinone + NADH + 5 H(+)(in) = a ubiquinol + NAD(+) + 4 H(+)(out)</text>
        <dbReference type="Rhea" id="RHEA:29091"/>
        <dbReference type="Rhea" id="RHEA-COMP:9565"/>
        <dbReference type="Rhea" id="RHEA-COMP:9566"/>
        <dbReference type="ChEBI" id="CHEBI:15378"/>
        <dbReference type="ChEBI" id="CHEBI:16389"/>
        <dbReference type="ChEBI" id="CHEBI:17976"/>
        <dbReference type="ChEBI" id="CHEBI:57540"/>
        <dbReference type="ChEBI" id="CHEBI:57945"/>
        <dbReference type="EC" id="7.1.1.2"/>
    </reaction>
</comment>
<comment type="subunit">
    <text evidence="2">Core subunit of respiratory chain NADH dehydrogenase (Complex I) which is composed of 45 different subunits.</text>
</comment>
<comment type="subcellular location">
    <subcellularLocation>
        <location evidence="2">Mitochondrion inner membrane</location>
        <topology evidence="3">Multi-pass membrane protein</topology>
    </subcellularLocation>
</comment>
<comment type="similarity">
    <text evidence="4">Belongs to the complex I subunit 5 family.</text>
</comment>
<feature type="chain" id="PRO_0000118104" description="NADH-ubiquinone oxidoreductase chain 5">
    <location>
        <begin position="1"/>
        <end position="603"/>
    </location>
</feature>
<feature type="transmembrane region" description="Helical" evidence="3">
    <location>
        <begin position="3"/>
        <end position="23"/>
    </location>
</feature>
<feature type="transmembrane region" description="Helical" evidence="3">
    <location>
        <begin position="38"/>
        <end position="58"/>
    </location>
</feature>
<feature type="transmembrane region" description="Helical" evidence="3">
    <location>
        <begin position="87"/>
        <end position="107"/>
    </location>
</feature>
<feature type="transmembrane region" description="Helical" evidence="3">
    <location>
        <begin position="117"/>
        <end position="137"/>
    </location>
</feature>
<feature type="transmembrane region" description="Helical" evidence="3">
    <location>
        <begin position="140"/>
        <end position="160"/>
    </location>
</feature>
<feature type="transmembrane region" description="Helical" evidence="3">
    <location>
        <begin position="171"/>
        <end position="191"/>
    </location>
</feature>
<feature type="transmembrane region" description="Helical" evidence="3">
    <location>
        <begin position="211"/>
        <end position="233"/>
    </location>
</feature>
<feature type="transmembrane region" description="Helical" evidence="3">
    <location>
        <begin position="241"/>
        <end position="261"/>
    </location>
</feature>
<feature type="transmembrane region" description="Helical" evidence="3">
    <location>
        <begin position="273"/>
        <end position="293"/>
    </location>
</feature>
<feature type="transmembrane region" description="Helical" evidence="3">
    <location>
        <begin position="301"/>
        <end position="320"/>
    </location>
</feature>
<feature type="transmembrane region" description="Helical" evidence="3">
    <location>
        <begin position="325"/>
        <end position="347"/>
    </location>
</feature>
<feature type="transmembrane region" description="Helical" evidence="3">
    <location>
        <begin position="366"/>
        <end position="386"/>
    </location>
</feature>
<feature type="transmembrane region" description="Helical" evidence="3">
    <location>
        <begin position="413"/>
        <end position="433"/>
    </location>
</feature>
<feature type="transmembrane region" description="Helical" evidence="3">
    <location>
        <begin position="457"/>
        <end position="477"/>
    </location>
</feature>
<feature type="transmembrane region" description="Helical" evidence="3">
    <location>
        <begin position="482"/>
        <end position="502"/>
    </location>
</feature>
<feature type="transmembrane region" description="Helical" evidence="3">
    <location>
        <begin position="583"/>
        <end position="603"/>
    </location>
</feature>
<evidence type="ECO:0000250" key="1">
    <source>
        <dbReference type="UniProtKB" id="P03915"/>
    </source>
</evidence>
<evidence type="ECO:0000250" key="2">
    <source>
        <dbReference type="UniProtKB" id="P03920"/>
    </source>
</evidence>
<evidence type="ECO:0000255" key="3"/>
<evidence type="ECO:0000305" key="4"/>
<proteinExistence type="inferred from homology"/>
<sequence length="603" mass="68078">MNLLSSFTLVTLIILTLPIIMNVTNMYKNYPYAPYVKSSIACAFITSLIPTMLFISSGQETIISNWHWMTIQTLKLSISFKLDYFSMLFMPVALFVTWSIMEFSMWYMHSDPNMNQFFKYLLMFLITMLILVTANNLFQLFIGWEGVGIMSFLLIGWWYGRTDANTAALQAILYNRIGDIGFILAMAWFLMYSNTWEFQQMFMLNYHPDMIPLIGLLLAATGKSAQFGLHPWLPSAMEGPTPVSALLHSSTMVVAGIFLLIRFYPLMENNKTIQTLMLCLGAITTLFTAICALTQNDIKKIVAFSTSSQLGLMMVTMGINQPHLAFLHICNHAFFKAMLFMCSGSIIHNLNDEQDIRKMGGLFKSMPFTSSSLMIGSLALTGMPFLTGFYSKDLIIESVNTSNTNAWALTITLIATSMTAIYSIRIIFYALLGQPRFTTSTPINENNPLLINSIKRLALGSILAGFFLTNNILPMNVPQMTMPLYLKLTALMVTITGFALAMELNLMTNNLKFKLPSDIYKFSNSLGFYPMTMHRLIPSHNLIMSQNTASLLLDLIWMEKTMPKNLSQLQMTSSTAISNQMGLVKFYFLSFLMSLLFTLLLII</sequence>
<geneLocation type="mitochondrion"/>
<gene>
    <name type="primary">MT-ND5</name>
    <name type="synonym">MTND5</name>
    <name type="synonym">NADH5</name>
    <name type="synonym">ND5</name>
</gene>
<organism>
    <name type="scientific">Lemur catta</name>
    <name type="common">Ring-tailed lemur</name>
    <dbReference type="NCBI Taxonomy" id="9447"/>
    <lineage>
        <taxon>Eukaryota</taxon>
        <taxon>Metazoa</taxon>
        <taxon>Chordata</taxon>
        <taxon>Craniata</taxon>
        <taxon>Vertebrata</taxon>
        <taxon>Euteleostomi</taxon>
        <taxon>Mammalia</taxon>
        <taxon>Eutheria</taxon>
        <taxon>Euarchontoglires</taxon>
        <taxon>Primates</taxon>
        <taxon>Strepsirrhini</taxon>
        <taxon>Lemuriformes</taxon>
        <taxon>Lemuridae</taxon>
        <taxon>Lemur</taxon>
    </lineage>
</organism>